<name>AP2S_ASPFU</name>
<accession>Q4WS49</accession>
<evidence type="ECO:0000250" key="1"/>
<evidence type="ECO:0000305" key="2"/>
<reference key="1">
    <citation type="journal article" date="2005" name="Nature">
        <title>Genomic sequence of the pathogenic and allergenic filamentous fungus Aspergillus fumigatus.</title>
        <authorList>
            <person name="Nierman W.C."/>
            <person name="Pain A."/>
            <person name="Anderson M.J."/>
            <person name="Wortman J.R."/>
            <person name="Kim H.S."/>
            <person name="Arroyo J."/>
            <person name="Berriman M."/>
            <person name="Abe K."/>
            <person name="Archer D.B."/>
            <person name="Bermejo C."/>
            <person name="Bennett J.W."/>
            <person name="Bowyer P."/>
            <person name="Chen D."/>
            <person name="Collins M."/>
            <person name="Coulsen R."/>
            <person name="Davies R."/>
            <person name="Dyer P.S."/>
            <person name="Farman M.L."/>
            <person name="Fedorova N."/>
            <person name="Fedorova N.D."/>
            <person name="Feldblyum T.V."/>
            <person name="Fischer R."/>
            <person name="Fosker N."/>
            <person name="Fraser A."/>
            <person name="Garcia J.L."/>
            <person name="Garcia M.J."/>
            <person name="Goble A."/>
            <person name="Goldman G.H."/>
            <person name="Gomi K."/>
            <person name="Griffith-Jones S."/>
            <person name="Gwilliam R."/>
            <person name="Haas B.J."/>
            <person name="Haas H."/>
            <person name="Harris D.E."/>
            <person name="Horiuchi H."/>
            <person name="Huang J."/>
            <person name="Humphray S."/>
            <person name="Jimenez J."/>
            <person name="Keller N."/>
            <person name="Khouri H."/>
            <person name="Kitamoto K."/>
            <person name="Kobayashi T."/>
            <person name="Konzack S."/>
            <person name="Kulkarni R."/>
            <person name="Kumagai T."/>
            <person name="Lafton A."/>
            <person name="Latge J.-P."/>
            <person name="Li W."/>
            <person name="Lord A."/>
            <person name="Lu C."/>
            <person name="Majoros W.H."/>
            <person name="May G.S."/>
            <person name="Miller B.L."/>
            <person name="Mohamoud Y."/>
            <person name="Molina M."/>
            <person name="Monod M."/>
            <person name="Mouyna I."/>
            <person name="Mulligan S."/>
            <person name="Murphy L.D."/>
            <person name="O'Neil S."/>
            <person name="Paulsen I."/>
            <person name="Penalva M.A."/>
            <person name="Pertea M."/>
            <person name="Price C."/>
            <person name="Pritchard B.L."/>
            <person name="Quail M.A."/>
            <person name="Rabbinowitsch E."/>
            <person name="Rawlins N."/>
            <person name="Rajandream M.A."/>
            <person name="Reichard U."/>
            <person name="Renauld H."/>
            <person name="Robson G.D."/>
            <person name="Rodriguez de Cordoba S."/>
            <person name="Rodriguez-Pena J.M."/>
            <person name="Ronning C.M."/>
            <person name="Rutter S."/>
            <person name="Salzberg S.L."/>
            <person name="Sanchez M."/>
            <person name="Sanchez-Ferrero J.C."/>
            <person name="Saunders D."/>
            <person name="Seeger K."/>
            <person name="Squares R."/>
            <person name="Squares S."/>
            <person name="Takeuchi M."/>
            <person name="Tekaia F."/>
            <person name="Turner G."/>
            <person name="Vazquez de Aldana C.R."/>
            <person name="Weidman J."/>
            <person name="White O."/>
            <person name="Woodward J.R."/>
            <person name="Yu J.-H."/>
            <person name="Fraser C.M."/>
            <person name="Galagan J.E."/>
            <person name="Asai K."/>
            <person name="Machida M."/>
            <person name="Hall N."/>
            <person name="Barrell B.G."/>
            <person name="Denning D.W."/>
        </authorList>
    </citation>
    <scope>NUCLEOTIDE SEQUENCE [LARGE SCALE GENOMIC DNA]</scope>
    <source>
        <strain>ATCC MYA-4609 / CBS 101355 / FGSC A1100 / Af293</strain>
    </source>
</reference>
<proteinExistence type="inferred from homology"/>
<keyword id="KW-1003">Cell membrane</keyword>
<keyword id="KW-0168">Coated pit</keyword>
<keyword id="KW-0254">Endocytosis</keyword>
<keyword id="KW-0472">Membrane</keyword>
<keyword id="KW-0653">Protein transport</keyword>
<keyword id="KW-1185">Reference proteome</keyword>
<keyword id="KW-0813">Transport</keyword>
<comment type="function">
    <text evidence="1">Component of the adaptor complexes which link clathrin to receptors in coated vesicles. Clathrin-associated protein complexes are believed to interact with the cytoplasmic tails of membrane proteins, leading to their selection and concentration (By similarity).</text>
</comment>
<comment type="subunit">
    <text evidence="1">Adaptor protein complex 2 (AP-2) is a heterotetramer composed of two large adaptins (alpha-type subunit apl3 and beta-type subunit apl1), a medium chain (mu-type subunit apm4) and a small adaptin (sigma-type subunit aps2).</text>
</comment>
<comment type="subcellular location">
    <subcellularLocation>
        <location evidence="1">Cell membrane</location>
    </subcellularLocation>
    <subcellularLocation>
        <location evidence="1">Membrane</location>
        <location evidence="1">Coated pit</location>
        <topology evidence="1">Peripheral membrane protein</topology>
        <orientation evidence="1">Cytoplasmic side</orientation>
    </subcellularLocation>
    <text evidence="1">Component of the coat surrounding the cytoplasmic face of the plasma membrane coated vesicles.</text>
</comment>
<comment type="similarity">
    <text evidence="2">Belongs to the adaptor complexes small subunit family.</text>
</comment>
<dbReference type="EMBL" id="AAHF01000004">
    <property type="protein sequence ID" value="EAL90733.1"/>
    <property type="molecule type" value="Genomic_DNA"/>
</dbReference>
<dbReference type="RefSeq" id="XP_752771.1">
    <property type="nucleotide sequence ID" value="XM_747678.1"/>
</dbReference>
<dbReference type="SMR" id="Q4WS49"/>
<dbReference type="FunCoup" id="Q4WS49">
    <property type="interactions" value="456"/>
</dbReference>
<dbReference type="STRING" id="330879.Q4WS49"/>
<dbReference type="EnsemblFungi" id="EAL90733">
    <property type="protein sequence ID" value="EAL90733"/>
    <property type="gene ID" value="AFUA_1G14010"/>
</dbReference>
<dbReference type="GeneID" id="3510665"/>
<dbReference type="KEGG" id="afm:AFUA_1G14010"/>
<dbReference type="VEuPathDB" id="FungiDB:Afu1g14010"/>
<dbReference type="eggNOG" id="KOG0935">
    <property type="taxonomic scope" value="Eukaryota"/>
</dbReference>
<dbReference type="HOGENOM" id="CLU_061221_3_2_1"/>
<dbReference type="InParanoid" id="Q4WS49"/>
<dbReference type="OMA" id="QSNFVEY"/>
<dbReference type="OrthoDB" id="371463at2759"/>
<dbReference type="Proteomes" id="UP000002530">
    <property type="component" value="Chromosome 1"/>
</dbReference>
<dbReference type="GO" id="GO:0030122">
    <property type="term" value="C:AP-2 adaptor complex"/>
    <property type="evidence" value="ECO:0007669"/>
    <property type="project" value="InterPro"/>
</dbReference>
<dbReference type="GO" id="GO:0043231">
    <property type="term" value="C:intracellular membrane-bounded organelle"/>
    <property type="evidence" value="ECO:0000318"/>
    <property type="project" value="GO_Central"/>
</dbReference>
<dbReference type="GO" id="GO:0035615">
    <property type="term" value="F:clathrin adaptor activity"/>
    <property type="evidence" value="ECO:0007669"/>
    <property type="project" value="InterPro"/>
</dbReference>
<dbReference type="GO" id="GO:0072583">
    <property type="term" value="P:clathrin-dependent endocytosis"/>
    <property type="evidence" value="ECO:0007669"/>
    <property type="project" value="InterPro"/>
</dbReference>
<dbReference type="GO" id="GO:0015031">
    <property type="term" value="P:protein transport"/>
    <property type="evidence" value="ECO:0007669"/>
    <property type="project" value="UniProtKB-KW"/>
</dbReference>
<dbReference type="GO" id="GO:0016192">
    <property type="term" value="P:vesicle-mediated transport"/>
    <property type="evidence" value="ECO:0000318"/>
    <property type="project" value="GO_Central"/>
</dbReference>
<dbReference type="CDD" id="cd14833">
    <property type="entry name" value="AP2_sigma"/>
    <property type="match status" value="1"/>
</dbReference>
<dbReference type="FunFam" id="3.30.450.60:FF:000011">
    <property type="entry name" value="AP complex subunit sigma"/>
    <property type="match status" value="1"/>
</dbReference>
<dbReference type="Gene3D" id="3.30.450.60">
    <property type="match status" value="1"/>
</dbReference>
<dbReference type="InterPro" id="IPR016635">
    <property type="entry name" value="AP_complex_ssu"/>
</dbReference>
<dbReference type="InterPro" id="IPR022775">
    <property type="entry name" value="AP_mu_sigma_su"/>
</dbReference>
<dbReference type="InterPro" id="IPR027156">
    <property type="entry name" value="APS2"/>
</dbReference>
<dbReference type="InterPro" id="IPR011012">
    <property type="entry name" value="Longin-like_dom_sf"/>
</dbReference>
<dbReference type="PANTHER" id="PTHR11753">
    <property type="entry name" value="ADAPTOR COMPLEXES SMALL SUBUNIT FAMILY"/>
    <property type="match status" value="1"/>
</dbReference>
<dbReference type="Pfam" id="PF01217">
    <property type="entry name" value="Clat_adaptor_s"/>
    <property type="match status" value="1"/>
</dbReference>
<dbReference type="PIRSF" id="PIRSF015588">
    <property type="entry name" value="AP_complex_sigma"/>
    <property type="match status" value="1"/>
</dbReference>
<dbReference type="SUPFAM" id="SSF64356">
    <property type="entry name" value="SNARE-like"/>
    <property type="match status" value="1"/>
</dbReference>
<sequence length="145" mass="17090">MVLSFILVQNRQGKTRLAKWYAPYSDEEKVKLKGEVHRLVAPRDQKYQSNFVEFKRSTKIVYRRYAGLFFCVCVDATDNELAYLEAIHFFVEVLDQFFGNVCELDLVFNFYKVYAILDEVFLAGEIEETSKQVVLTRLEHLDKLE</sequence>
<organism>
    <name type="scientific">Aspergillus fumigatus (strain ATCC MYA-4609 / CBS 101355 / FGSC A1100 / Af293)</name>
    <name type="common">Neosartorya fumigata</name>
    <dbReference type="NCBI Taxonomy" id="330879"/>
    <lineage>
        <taxon>Eukaryota</taxon>
        <taxon>Fungi</taxon>
        <taxon>Dikarya</taxon>
        <taxon>Ascomycota</taxon>
        <taxon>Pezizomycotina</taxon>
        <taxon>Eurotiomycetes</taxon>
        <taxon>Eurotiomycetidae</taxon>
        <taxon>Eurotiales</taxon>
        <taxon>Aspergillaceae</taxon>
        <taxon>Aspergillus</taxon>
        <taxon>Aspergillus subgen. Fumigati</taxon>
    </lineage>
</organism>
<gene>
    <name type="primary">aps2</name>
    <name type="ORF">AFUA_1G14010</name>
</gene>
<feature type="chain" id="PRO_0000193809" description="AP-2 complex subunit sigma">
    <location>
        <begin position="1"/>
        <end position="145"/>
    </location>
</feature>
<protein>
    <recommendedName>
        <fullName>AP-2 complex subunit sigma</fullName>
    </recommendedName>
    <alternativeName>
        <fullName>Adaptin small chain</fullName>
    </alternativeName>
    <alternativeName>
        <fullName>Clathrin assembly protein 2 sigma small chain</fullName>
    </alternativeName>
    <alternativeName>
        <fullName>Sigma2-adaptin</fullName>
    </alternativeName>
</protein>